<name>CYB_CAPNU</name>
<evidence type="ECO:0000250" key="1"/>
<evidence type="ECO:0000250" key="2">
    <source>
        <dbReference type="UniProtKB" id="P00157"/>
    </source>
</evidence>
<evidence type="ECO:0000255" key="3">
    <source>
        <dbReference type="PROSITE-ProRule" id="PRU00967"/>
    </source>
</evidence>
<evidence type="ECO:0000255" key="4">
    <source>
        <dbReference type="PROSITE-ProRule" id="PRU00968"/>
    </source>
</evidence>
<comment type="function">
    <text evidence="2">Component of the ubiquinol-cytochrome c reductase complex (complex III or cytochrome b-c1 complex) that is part of the mitochondrial respiratory chain. The b-c1 complex mediates electron transfer from ubiquinol to cytochrome c. Contributes to the generation of a proton gradient across the mitochondrial membrane that is then used for ATP synthesis.</text>
</comment>
<comment type="cofactor">
    <cofactor evidence="2">
        <name>heme b</name>
        <dbReference type="ChEBI" id="CHEBI:60344"/>
    </cofactor>
    <text evidence="2">Binds 2 heme b groups non-covalently.</text>
</comment>
<comment type="subunit">
    <text evidence="2">The cytochrome bc1 complex contains 11 subunits: 3 respiratory subunits (MT-CYB, CYC1 and UQCRFS1), 2 core proteins (UQCRC1 and UQCRC2) and 6 low-molecular weight proteins (UQCRH/QCR6, UQCRB/QCR7, UQCRQ/QCR8, UQCR10/QCR9, UQCR11/QCR10 and a cleavage product of UQCRFS1). This cytochrome bc1 complex then forms a dimer.</text>
</comment>
<comment type="subcellular location">
    <subcellularLocation>
        <location evidence="2">Mitochondrion inner membrane</location>
        <topology evidence="2">Multi-pass membrane protein</topology>
    </subcellularLocation>
</comment>
<comment type="miscellaneous">
    <text evidence="1">Heme 1 (or BL or b562) is low-potential and absorbs at about 562 nm, and heme 2 (or BH or b566) is high-potential and absorbs at about 566 nm.</text>
</comment>
<comment type="similarity">
    <text evidence="3 4">Belongs to the cytochrome b family.</text>
</comment>
<comment type="caution">
    <text evidence="2">The full-length protein contains only eight transmembrane helices, not nine as predicted by bioinformatics tools.</text>
</comment>
<proteinExistence type="inferred from homology"/>
<sequence length="379" mass="42835">MTNIRKTHPLMKIVNNAFIDLPTPPNISSWWNFGSLLGICLILQILTGLFLAMHYTSDTTTAFSSVTHICRDVNYGWIIRYMHANGASMFFICLFMHVGRGLYYGSYTFLETWNIGVILLLTTMATAFMGYVLPWGQMSFWGATVITNLLSAIPYIGTNLVEWIWGGFSVDKATLTRFFAFHFILPFIIAALAMVHLLFLHETGSNNPTGIPSDTDKIPFHPYYTIKDILGIMLLILVLMLLVLFTPDLLGDPDNYIPANPLNTPPHIKPEWYFLFAYAILRSIPNKLGGVLALVLSILILVLVPFLHTSKQRSMMFRPISQCMFWILAADLLTLTWIGGQPVEHPYIIIGQLASIMYFLIILVMMPAASTIENNLLKW</sequence>
<organism>
    <name type="scientific">Capra nubiana</name>
    <name type="common">Nubian ibex</name>
    <name type="synonym">Capra ibex nubiana</name>
    <dbReference type="NCBI Taxonomy" id="72543"/>
    <lineage>
        <taxon>Eukaryota</taxon>
        <taxon>Metazoa</taxon>
        <taxon>Chordata</taxon>
        <taxon>Craniata</taxon>
        <taxon>Vertebrata</taxon>
        <taxon>Euteleostomi</taxon>
        <taxon>Mammalia</taxon>
        <taxon>Eutheria</taxon>
        <taxon>Laurasiatheria</taxon>
        <taxon>Artiodactyla</taxon>
        <taxon>Ruminantia</taxon>
        <taxon>Pecora</taxon>
        <taxon>Bovidae</taxon>
        <taxon>Caprinae</taxon>
        <taxon>Capra</taxon>
    </lineage>
</organism>
<reference key="1">
    <citation type="journal article" date="1998" name="J. Mammal. Evol.">
        <title>Molecular systematics of the subfamily Caprinae (Artiodactyla, Bovidae) as determined from cytochrome b sequences.</title>
        <authorList>
            <person name="Hassanin A."/>
            <person name="Pasquet E."/>
            <person name="Vigne J.-D."/>
        </authorList>
    </citation>
    <scope>NUCLEOTIDE SEQUENCE [GENOMIC DNA]</scope>
</reference>
<feature type="chain" id="PRO_0000060728" description="Cytochrome b">
    <location>
        <begin position="1"/>
        <end position="379"/>
    </location>
</feature>
<feature type="transmembrane region" description="Helical" evidence="2">
    <location>
        <begin position="33"/>
        <end position="53"/>
    </location>
</feature>
<feature type="transmembrane region" description="Helical" evidence="2">
    <location>
        <begin position="77"/>
        <end position="98"/>
    </location>
</feature>
<feature type="transmembrane region" description="Helical" evidence="2">
    <location>
        <begin position="113"/>
        <end position="133"/>
    </location>
</feature>
<feature type="transmembrane region" description="Helical" evidence="2">
    <location>
        <begin position="178"/>
        <end position="198"/>
    </location>
</feature>
<feature type="transmembrane region" description="Helical" evidence="2">
    <location>
        <begin position="226"/>
        <end position="246"/>
    </location>
</feature>
<feature type="transmembrane region" description="Helical" evidence="2">
    <location>
        <begin position="288"/>
        <end position="308"/>
    </location>
</feature>
<feature type="transmembrane region" description="Helical" evidence="2">
    <location>
        <begin position="320"/>
        <end position="340"/>
    </location>
</feature>
<feature type="transmembrane region" description="Helical" evidence="2">
    <location>
        <begin position="347"/>
        <end position="367"/>
    </location>
</feature>
<feature type="binding site" description="axial binding residue" evidence="2">
    <location>
        <position position="83"/>
    </location>
    <ligand>
        <name>heme b</name>
        <dbReference type="ChEBI" id="CHEBI:60344"/>
        <label>b562</label>
    </ligand>
    <ligandPart>
        <name>Fe</name>
        <dbReference type="ChEBI" id="CHEBI:18248"/>
    </ligandPart>
</feature>
<feature type="binding site" description="axial binding residue" evidence="2">
    <location>
        <position position="97"/>
    </location>
    <ligand>
        <name>heme b</name>
        <dbReference type="ChEBI" id="CHEBI:60344"/>
        <label>b566</label>
    </ligand>
    <ligandPart>
        <name>Fe</name>
        <dbReference type="ChEBI" id="CHEBI:18248"/>
    </ligandPart>
</feature>
<feature type="binding site" description="axial binding residue" evidence="2">
    <location>
        <position position="182"/>
    </location>
    <ligand>
        <name>heme b</name>
        <dbReference type="ChEBI" id="CHEBI:60344"/>
        <label>b562</label>
    </ligand>
    <ligandPart>
        <name>Fe</name>
        <dbReference type="ChEBI" id="CHEBI:18248"/>
    </ligandPart>
</feature>
<feature type="binding site" description="axial binding residue" evidence="2">
    <location>
        <position position="196"/>
    </location>
    <ligand>
        <name>heme b</name>
        <dbReference type="ChEBI" id="CHEBI:60344"/>
        <label>b566</label>
    </ligand>
    <ligandPart>
        <name>Fe</name>
        <dbReference type="ChEBI" id="CHEBI:18248"/>
    </ligandPart>
</feature>
<feature type="binding site" evidence="2">
    <location>
        <position position="201"/>
    </location>
    <ligand>
        <name>a ubiquinone</name>
        <dbReference type="ChEBI" id="CHEBI:16389"/>
    </ligand>
</feature>
<accession>O78790</accession>
<dbReference type="EMBL" id="AF034740">
    <property type="protein sequence ID" value="AAC31695.1"/>
    <property type="molecule type" value="Genomic_DNA"/>
</dbReference>
<dbReference type="RefSeq" id="YP_007625080.1">
    <property type="nucleotide sequence ID" value="NC_020624.1"/>
</dbReference>
<dbReference type="SMR" id="O78790"/>
<dbReference type="GeneID" id="14841627"/>
<dbReference type="CTD" id="4519"/>
<dbReference type="GO" id="GO:0005743">
    <property type="term" value="C:mitochondrial inner membrane"/>
    <property type="evidence" value="ECO:0007669"/>
    <property type="project" value="UniProtKB-SubCell"/>
</dbReference>
<dbReference type="GO" id="GO:0045275">
    <property type="term" value="C:respiratory chain complex III"/>
    <property type="evidence" value="ECO:0007669"/>
    <property type="project" value="InterPro"/>
</dbReference>
<dbReference type="GO" id="GO:0046872">
    <property type="term" value="F:metal ion binding"/>
    <property type="evidence" value="ECO:0007669"/>
    <property type="project" value="UniProtKB-KW"/>
</dbReference>
<dbReference type="GO" id="GO:0008121">
    <property type="term" value="F:ubiquinol-cytochrome-c reductase activity"/>
    <property type="evidence" value="ECO:0007669"/>
    <property type="project" value="InterPro"/>
</dbReference>
<dbReference type="GO" id="GO:0006122">
    <property type="term" value="P:mitochondrial electron transport, ubiquinol to cytochrome c"/>
    <property type="evidence" value="ECO:0007669"/>
    <property type="project" value="TreeGrafter"/>
</dbReference>
<dbReference type="CDD" id="cd00290">
    <property type="entry name" value="cytochrome_b_C"/>
    <property type="match status" value="1"/>
</dbReference>
<dbReference type="CDD" id="cd00284">
    <property type="entry name" value="Cytochrome_b_N"/>
    <property type="match status" value="1"/>
</dbReference>
<dbReference type="FunFam" id="1.20.810.10:FF:000002">
    <property type="entry name" value="Cytochrome b"/>
    <property type="match status" value="1"/>
</dbReference>
<dbReference type="Gene3D" id="1.20.810.10">
    <property type="entry name" value="Cytochrome Bc1 Complex, Chain C"/>
    <property type="match status" value="1"/>
</dbReference>
<dbReference type="InterPro" id="IPR005798">
    <property type="entry name" value="Cyt_b/b6_C"/>
</dbReference>
<dbReference type="InterPro" id="IPR036150">
    <property type="entry name" value="Cyt_b/b6_C_sf"/>
</dbReference>
<dbReference type="InterPro" id="IPR005797">
    <property type="entry name" value="Cyt_b/b6_N"/>
</dbReference>
<dbReference type="InterPro" id="IPR027387">
    <property type="entry name" value="Cytb/b6-like_sf"/>
</dbReference>
<dbReference type="InterPro" id="IPR030689">
    <property type="entry name" value="Cytochrome_b"/>
</dbReference>
<dbReference type="InterPro" id="IPR048260">
    <property type="entry name" value="Cytochrome_b_C_euk/bac"/>
</dbReference>
<dbReference type="InterPro" id="IPR048259">
    <property type="entry name" value="Cytochrome_b_N_euk/bac"/>
</dbReference>
<dbReference type="InterPro" id="IPR016174">
    <property type="entry name" value="Di-haem_cyt_TM"/>
</dbReference>
<dbReference type="PANTHER" id="PTHR19271">
    <property type="entry name" value="CYTOCHROME B"/>
    <property type="match status" value="1"/>
</dbReference>
<dbReference type="PANTHER" id="PTHR19271:SF16">
    <property type="entry name" value="CYTOCHROME B"/>
    <property type="match status" value="1"/>
</dbReference>
<dbReference type="Pfam" id="PF00032">
    <property type="entry name" value="Cytochrom_B_C"/>
    <property type="match status" value="1"/>
</dbReference>
<dbReference type="Pfam" id="PF00033">
    <property type="entry name" value="Cytochrome_B"/>
    <property type="match status" value="1"/>
</dbReference>
<dbReference type="PIRSF" id="PIRSF038885">
    <property type="entry name" value="COB"/>
    <property type="match status" value="1"/>
</dbReference>
<dbReference type="SUPFAM" id="SSF81648">
    <property type="entry name" value="a domain/subunit of cytochrome bc1 complex (Ubiquinol-cytochrome c reductase)"/>
    <property type="match status" value="1"/>
</dbReference>
<dbReference type="SUPFAM" id="SSF81342">
    <property type="entry name" value="Transmembrane di-heme cytochromes"/>
    <property type="match status" value="1"/>
</dbReference>
<dbReference type="PROSITE" id="PS51003">
    <property type="entry name" value="CYTB_CTER"/>
    <property type="match status" value="1"/>
</dbReference>
<dbReference type="PROSITE" id="PS51002">
    <property type="entry name" value="CYTB_NTER"/>
    <property type="match status" value="1"/>
</dbReference>
<keyword id="KW-0249">Electron transport</keyword>
<keyword id="KW-0349">Heme</keyword>
<keyword id="KW-0408">Iron</keyword>
<keyword id="KW-0472">Membrane</keyword>
<keyword id="KW-0479">Metal-binding</keyword>
<keyword id="KW-0496">Mitochondrion</keyword>
<keyword id="KW-0999">Mitochondrion inner membrane</keyword>
<keyword id="KW-0679">Respiratory chain</keyword>
<keyword id="KW-0812">Transmembrane</keyword>
<keyword id="KW-1133">Transmembrane helix</keyword>
<keyword id="KW-0813">Transport</keyword>
<keyword id="KW-0830">Ubiquinone</keyword>
<protein>
    <recommendedName>
        <fullName>Cytochrome b</fullName>
    </recommendedName>
    <alternativeName>
        <fullName>Complex III subunit 3</fullName>
    </alternativeName>
    <alternativeName>
        <fullName>Complex III subunit III</fullName>
    </alternativeName>
    <alternativeName>
        <fullName>Cytochrome b-c1 complex subunit 3</fullName>
    </alternativeName>
    <alternativeName>
        <fullName>Ubiquinol-cytochrome-c reductase complex cytochrome b subunit</fullName>
    </alternativeName>
</protein>
<geneLocation type="mitochondrion"/>
<gene>
    <name type="primary">MT-CYB</name>
    <name type="synonym">COB</name>
    <name type="synonym">CYTB</name>
    <name type="synonym">MTCYB</name>
</gene>